<feature type="chain" id="PRO_0000065368" description="Uncharacterized protein F54H12.4">
    <location>
        <begin position="1"/>
        <end position="381"/>
    </location>
</feature>
<feature type="region of interest" description="Disordered" evidence="1">
    <location>
        <begin position="176"/>
        <end position="292"/>
    </location>
</feature>
<feature type="compositionally biased region" description="Basic residues" evidence="1">
    <location>
        <begin position="177"/>
        <end position="186"/>
    </location>
</feature>
<feature type="compositionally biased region" description="Basic and acidic residues" evidence="1">
    <location>
        <begin position="187"/>
        <end position="212"/>
    </location>
</feature>
<feature type="compositionally biased region" description="Acidic residues" evidence="1">
    <location>
        <begin position="276"/>
        <end position="286"/>
    </location>
</feature>
<protein>
    <recommendedName>
        <fullName>Uncharacterized protein F54H12.4</fullName>
    </recommendedName>
</protein>
<organism>
    <name type="scientific">Caenorhabditis elegans</name>
    <dbReference type="NCBI Taxonomy" id="6239"/>
    <lineage>
        <taxon>Eukaryota</taxon>
        <taxon>Metazoa</taxon>
        <taxon>Ecdysozoa</taxon>
        <taxon>Nematoda</taxon>
        <taxon>Chromadorea</taxon>
        <taxon>Rhabditida</taxon>
        <taxon>Rhabditina</taxon>
        <taxon>Rhabditomorpha</taxon>
        <taxon>Rhabditoidea</taxon>
        <taxon>Rhabditidae</taxon>
        <taxon>Peloderinae</taxon>
        <taxon>Caenorhabditis</taxon>
    </lineage>
</organism>
<dbReference type="EMBL" id="BX284603">
    <property type="protein sequence ID" value="CCD63458.2"/>
    <property type="molecule type" value="Genomic_DNA"/>
</dbReference>
<dbReference type="PIR" id="S44834">
    <property type="entry name" value="S44834"/>
</dbReference>
<dbReference type="RefSeq" id="NP_001367455.1">
    <property type="nucleotide sequence ID" value="NM_001379815.1"/>
</dbReference>
<dbReference type="RefSeq" id="NP_498734.1">
    <property type="nucleotide sequence ID" value="NM_066333.1"/>
</dbReference>
<dbReference type="SMR" id="P34458"/>
<dbReference type="PaxDb" id="6239-F54H12.4"/>
<dbReference type="EnsemblMetazoa" id="F54H12.4.1">
    <property type="protein sequence ID" value="F54H12.4.1"/>
    <property type="gene ID" value="WBGene00018844"/>
</dbReference>
<dbReference type="GeneID" id="186268"/>
<dbReference type="UCSC" id="F54H12.4">
    <property type="organism name" value="c. elegans"/>
</dbReference>
<dbReference type="AGR" id="WB:WBGene00018844"/>
<dbReference type="WormBase" id="F54H12.4">
    <property type="protein sequence ID" value="CE54146"/>
    <property type="gene ID" value="WBGene00018844"/>
</dbReference>
<dbReference type="HOGENOM" id="CLU_819504_0_0_1"/>
<dbReference type="InParanoid" id="P34458"/>
<dbReference type="OrthoDB" id="5877201at2759"/>
<dbReference type="PhylomeDB" id="P34458"/>
<dbReference type="PRO" id="PR:P34458"/>
<dbReference type="Proteomes" id="UP000001940">
    <property type="component" value="Chromosome III"/>
</dbReference>
<dbReference type="Bgee" id="WBGene00018844">
    <property type="expression patterns" value="Expressed in adult organism"/>
</dbReference>
<gene>
    <name evidence="2" type="ORF">F54H12.4</name>
</gene>
<reference key="1">
    <citation type="journal article" date="1994" name="Nature">
        <title>2.2 Mb of contiguous nucleotide sequence from chromosome III of C. elegans.</title>
        <authorList>
            <person name="Wilson R."/>
            <person name="Ainscough R."/>
            <person name="Anderson K."/>
            <person name="Baynes C."/>
            <person name="Berks M."/>
            <person name="Bonfield J."/>
            <person name="Burton J."/>
            <person name="Connell M."/>
            <person name="Copsey T."/>
            <person name="Cooper J."/>
            <person name="Coulson A."/>
            <person name="Craxton M."/>
            <person name="Dear S."/>
            <person name="Du Z."/>
            <person name="Durbin R."/>
            <person name="Favello A."/>
            <person name="Fraser A."/>
            <person name="Fulton L."/>
            <person name="Gardner A."/>
            <person name="Green P."/>
            <person name="Hawkins T."/>
            <person name="Hillier L."/>
            <person name="Jier M."/>
            <person name="Johnston L."/>
            <person name="Jones M."/>
            <person name="Kershaw J."/>
            <person name="Kirsten J."/>
            <person name="Laisster N."/>
            <person name="Latreille P."/>
            <person name="Lightning J."/>
            <person name="Lloyd C."/>
            <person name="Mortimore B."/>
            <person name="O'Callaghan M."/>
            <person name="Parsons J."/>
            <person name="Percy C."/>
            <person name="Rifken L."/>
            <person name="Roopra A."/>
            <person name="Saunders D."/>
            <person name="Shownkeen R."/>
            <person name="Sims M."/>
            <person name="Smaldon N."/>
            <person name="Smith A."/>
            <person name="Smith M."/>
            <person name="Sonnhammer E."/>
            <person name="Staden R."/>
            <person name="Sulston J."/>
            <person name="Thierry-Mieg J."/>
            <person name="Thomas K."/>
            <person name="Vaudin M."/>
            <person name="Vaughan K."/>
            <person name="Waterston R."/>
            <person name="Watson A."/>
            <person name="Weinstock L."/>
            <person name="Wilkinson-Sproat J."/>
            <person name="Wohldman P."/>
        </authorList>
    </citation>
    <scope>NUCLEOTIDE SEQUENCE [LARGE SCALE GENOMIC DNA]</scope>
    <source>
        <strain>Bristol N2</strain>
    </source>
</reference>
<reference key="2">
    <citation type="journal article" date="1998" name="Science">
        <title>Genome sequence of the nematode C. elegans: a platform for investigating biology.</title>
        <authorList>
            <consortium name="The C. elegans sequencing consortium"/>
        </authorList>
    </citation>
    <scope>NUCLEOTIDE SEQUENCE [LARGE SCALE GENOMIC DNA]</scope>
    <source>
        <strain>Bristol N2</strain>
    </source>
</reference>
<sequence length="381" mass="45160">MKLIRKYHMIPYENGSEYESAKRFLENILSASDVDPTTKCRFYQDVLYRIRNHPELPIVTEELFDVVQENLQQQNDNQKRNVKLERRNLKYEVIPEKRESYQEKDYTNPPVYKAENEQLFDDVPYRNDGINHLKPRKNVYIKEEPEDEDYHMEYEKIPEINMEQNVNELFTEPQKHAAGKIKKSKNQKKDGTLSRPLGKKENKSVVKVKIEEPDQDMQAAPPRKPEEKNEETAPVSIKKRSFQQDATSNKRQKFDLKRGKSMNNVKPRKLYKMQLDEEDEDEEPMVDETPQNTEISIKKRPFQQDSTKNLNKRQKFDLKRRKNMSRVRPNKIYKMQNLKRNISSTIPDNGTNIPAAKRRVLRGSGSAPPPGSRVYCRLWKF</sequence>
<name>YMD4_CAEEL</name>
<accession>P34458</accession>
<keyword id="KW-1185">Reference proteome</keyword>
<proteinExistence type="predicted"/>
<evidence type="ECO:0000256" key="1">
    <source>
        <dbReference type="SAM" id="MobiDB-lite"/>
    </source>
</evidence>
<evidence type="ECO:0000312" key="2">
    <source>
        <dbReference type="WormBase" id="F54H12.4"/>
    </source>
</evidence>